<evidence type="ECO:0000250" key="1">
    <source>
        <dbReference type="UniProtKB" id="B2GV24"/>
    </source>
</evidence>
<evidence type="ECO:0000250" key="2">
    <source>
        <dbReference type="UniProtKB" id="O94874"/>
    </source>
</evidence>
<evidence type="ECO:0000256" key="3">
    <source>
        <dbReference type="SAM" id="MobiDB-lite"/>
    </source>
</evidence>
<evidence type="ECO:0000269" key="4">
    <source>
    </source>
</evidence>
<evidence type="ECO:0000269" key="5">
    <source>
    </source>
</evidence>
<evidence type="ECO:0000269" key="6">
    <source>
    </source>
</evidence>
<evidence type="ECO:0000269" key="7">
    <source>
    </source>
</evidence>
<evidence type="ECO:0000269" key="8">
    <source>
    </source>
</evidence>
<evidence type="ECO:0000269" key="9">
    <source>
    </source>
</evidence>
<evidence type="ECO:0000269" key="10">
    <source>
    </source>
</evidence>
<evidence type="ECO:0000269" key="11">
    <source>
    </source>
</evidence>
<evidence type="ECO:0000269" key="12">
    <source>
    </source>
</evidence>
<evidence type="ECO:0000269" key="13">
    <source>
    </source>
</evidence>
<evidence type="ECO:0000269" key="14">
    <source>
    </source>
</evidence>
<evidence type="ECO:0000303" key="15">
    <source>
    </source>
</evidence>
<evidence type="ECO:0000303" key="16">
    <source>
    </source>
</evidence>
<evidence type="ECO:0000303" key="17">
    <source>
    </source>
</evidence>
<evidence type="ECO:0000303" key="18">
    <source>
    </source>
</evidence>
<evidence type="ECO:0000305" key="19"/>
<evidence type="ECO:0000312" key="20">
    <source>
        <dbReference type="MGI" id="MGI:1914740"/>
    </source>
</evidence>
<evidence type="ECO:0007744" key="21">
    <source>
    </source>
</evidence>
<evidence type="ECO:0007744" key="22">
    <source>
    </source>
</evidence>
<evidence type="ECO:0007744" key="23">
    <source>
    </source>
</evidence>
<keyword id="KW-0007">Acetylation</keyword>
<keyword id="KW-0025">Alternative splicing</keyword>
<keyword id="KW-0158">Chromosome</keyword>
<keyword id="KW-0963">Cytoplasm</keyword>
<keyword id="KW-0227">DNA damage</keyword>
<keyword id="KW-0234">DNA repair</keyword>
<keyword id="KW-0256">Endoplasmic reticulum</keyword>
<keyword id="KW-0472">Membrane</keyword>
<keyword id="KW-0488">Methylation</keyword>
<keyword id="KW-0539">Nucleus</keyword>
<keyword id="KW-0597">Phosphoprotein</keyword>
<keyword id="KW-1185">Reference proteome</keyword>
<keyword id="KW-0808">Transferase</keyword>
<keyword id="KW-0832">Ubl conjugation</keyword>
<keyword id="KW-0833">Ubl conjugation pathway</keyword>
<comment type="function">
    <text evidence="2 7 8 9 12 13 14">E3 protein ligase that mediates ufmylation, the covalent attachment of the ubiquitin-like modifier UFM1 to lysine residues on target proteins, and which plays a key role in various processes, such as ribosome recycling, response to DNA damage, interferon response or reticulophagy (also called ER-phagy) (PubMed:28575669, PubMed:37795761, PubMed:38377992). Catalyzes ufmylation of many protein, such as CD274/PD-L1, CDK5RAP3, CYB5R3, DDRGK1, EIF6, histone H4, MRE11, P4HB, PDCD1/PD-1, TRIP4, RPN1, RPS20/uS10, RPL10/uL16, RPL26/uL24, SYVN1/HRD1 and TP53/p53 (PubMed:28575669, PubMed:37795761, PubMed:38377992). As part of the UREL complex, plays a key role in ribosome recycling by catalyzing mono-ufmylation of RPL26/uL24 subunit of the 60S ribosome (By similarity). Ufmylation of RPL26/uL24 occurs on free 60S ribosomes following ribosome dissociation: it weakens the junction between post-termination 60S subunits and SEC61 translocons, promoting release and recycling of the large ribosomal subunit from the endoplasmic reticulum membrane (By similarity). Ufmylation of RPL26/uL24 and subsequent 60S ribosome recycling either take place after normal termination of translation or after ribosome stalling during cotranslational translocation at the endoplasmic reticulum (By similarity). Involved in reticulophagy in response to endoplasmic reticulum stress by mediating ufmylation of proteins such as CYB5R3 and RPN1, thereby promoting lysosomal degradation of ufmylated proteins (By similarity). Ufmylation in response to endoplasmic reticulum stress is essential for processes such as hematopoiesis, blood vessel morphogenesis or inflammatory response (PubMed:25952549, PubMed:29461087, PubMed:30701081). Mediates ufmylation of DDRGK1 and CDK5RAP3; the role of these modifications is however unclear: as both DDRGK1 and CDK5RAP3 act as substrate adapters for ufmylation, it is uncertain whether ufmylation of these proteins is a collateral effect or is required for ufmylation (By similarity). Acts as a negative regulator of T-cell activation by mediating ufmylation and stabilization of PDCD1/PD-1 (PubMed:38377992). Also involved in the response to DNA damage: recruited to double-strand break sites following DNA damage and mediates monoufmylation of histone H4 and ufmylation of MRE11 (By similarity). Mediates ufmylation of TP53/p53, promoting its stability (By similarity). Catalyzes ufmylation of TRIP4, thereby playing a role in nuclear receptor-mediated transcription (By similarity). Required for hematopoietic stem cell function and hematopoiesis (PubMed:25952549).</text>
</comment>
<comment type="subunit">
    <text evidence="2 6 11">Catalytic component of the UFM1 ribosome E3 ligase (UREL) complex, composed of UFL1, DDRGK1 and CDK5RAP3 (PubMed:21494687, PubMed:30635284). Interacts with E2-like enzyme UFC1 (By similarity). Interacts with RELA (By similarity). Interacts with NBN; promoting recruitment to double-strand breaks following DNA damage (By similarity). Interacts (when phosphorylated) with YWHAG/14-3-3-gamma; sequestering UFL1 and preventing its association with PDCD1/PD-1 substrate (By similarity).</text>
</comment>
<comment type="subcellular location">
    <subcellularLocation>
        <location evidence="13">Endoplasmic reticulum membrane</location>
    </subcellularLocation>
    <subcellularLocation>
        <location evidence="2">Cytoplasm</location>
        <location evidence="2">Cytosol</location>
    </subcellularLocation>
    <subcellularLocation>
        <location evidence="2">Nucleus</location>
    </subcellularLocation>
    <subcellularLocation>
        <location evidence="2">Chromosome</location>
    </subcellularLocation>
    <text evidence="2">Recruited to double-strand breaks by the MRE11-RAD50-NBN (MRN) complex following DNA damage.</text>
</comment>
<comment type="alternative products">
    <event type="alternative splicing"/>
    <isoform>
        <id>Q8CCJ3-3</id>
        <name>1</name>
        <sequence type="displayed"/>
    </isoform>
    <isoform>
        <id>Q8CCJ3-1</id>
        <name>2</name>
        <sequence type="described" ref="VSP_014250 VSP_014251"/>
    </isoform>
    <isoform>
        <id>Q8CCJ3-2</id>
        <name>3</name>
        <sequence type="described" ref="VSP_014249"/>
    </isoform>
</comment>
<comment type="tissue specificity">
    <text evidence="4 5 6 10 12">Ubiquitously expressed with higher expression in pancreatic islets and other secretory tissues (PubMed:20228063, PubMed:21494687). In the embryonic brain at 17 dpc, detected in Sox2-positive neural stem cells and in Slc1a3/GLAST-positive radial glia (PubMed:20531390). In perinatal brain, highly expressed in Slc1a3-positive Bergmann glia of the cerebellum (PubMed:20531390). Continues to be expressed in Bergmann glia of adult brain at 16 weeks (PubMed:20531390). Expressed in adult heart (PubMed:30354401). Highly expressed in the intestinal exocrine cells (PubMed:30701081).</text>
</comment>
<comment type="induction">
    <text evidence="10">Up-regulated in hypertrophic hearts (at protein level).</text>
</comment>
<comment type="PTM">
    <text evidence="2">Ubiquitinated, leading to its degradation by the proteasome. Interaction with CDK5RAP3 protects both proteins against ubiquitination and degradation via the proteasome.</text>
</comment>
<comment type="PTM">
    <text evidence="2">Phosphorylated at Ser-462 by ATM, enhancing protein ligase activity and promoting ATM activation in a positive feedback loop (By similarity). Phosphorylation at Thr-535 by AMPK promotes its interaction with YWHAG/14-3-3-gamma, thereby preventing UFL1 association with PDCD1/PD-1 substrate (By similarity).</text>
</comment>
<comment type="disruption phenotype">
    <text evidence="7 10 12 14">Embryonic lethality caused by impaired erythroid development (PubMed:25952549). Conditional deletion in adult mice results in severe anemia and cytopenia (PubMed:25952549). Cells show elevated endoplasmic reticulum stress and unfolded protein response in bone marrow cells and impaired autophagic degradation (PubMed:25952549). Conditional knockout in cardiomyocytes causes age-dependent cardiomyopathy and heart failure, characterized by elevated cardiac fetal gene expression, increased fibrosis, and impaired cardiac contractility (PubMed:30354401). When challenged with pressure overload, cardiac-specific knockout mice display greater hypertrophy, exacerbated fibrosis, and worsened cardiac contractility compared to wild-type mice counterparts (PubMed:30354401). Conditional knockout in adults causes a significant loss of both Paneth and goblet cells in intestine, which in turn results in dysbiotic microbiota and increased susceptibility to experimentally induced colitis (PubMed:30701081). Mice with conditional deletion in T-cells show improved antitumor immunity due to enhanced CD8(+) T-cell activation (PubMed:38377992).</text>
</comment>
<comment type="similarity">
    <text evidence="19">Belongs to the UFL1 family.</text>
</comment>
<comment type="sequence caution" evidence="19">
    <conflict type="erroneous initiation">
        <sequence resource="EMBL-CDS" id="BAC98021"/>
    </conflict>
    <text>Extended N-terminus.</text>
</comment>
<gene>
    <name evidence="18 20" type="primary">Ufl1</name>
    <name evidence="15" type="synonym">Kiaa0776</name>
    <name evidence="17" type="synonym">Maxer</name>
    <name evidence="18" type="synonym">Rcad</name>
</gene>
<feature type="initiator methionine" description="Removed" evidence="2">
    <location>
        <position position="1"/>
    </location>
</feature>
<feature type="chain" id="PRO_0000050772" description="E3 UFM1-protein ligase 1">
    <location>
        <begin position="2"/>
        <end position="793"/>
    </location>
</feature>
<feature type="region of interest" description="Required for E3 UFM1-protein ligase activity" evidence="2">
    <location>
        <begin position="2"/>
        <end position="212"/>
    </location>
</feature>
<feature type="region of interest" description="Mediates interaction with DDRGK1" evidence="2">
    <location>
        <begin position="2"/>
        <end position="200"/>
    </location>
</feature>
<feature type="region of interest" description="Involved in CDK5RAP3-binding" evidence="2">
    <location>
        <begin position="121"/>
        <end position="250"/>
    </location>
</feature>
<feature type="region of interest" description="Mediates interaction with TRIP4" evidence="2">
    <location>
        <begin position="200"/>
        <end position="400"/>
    </location>
</feature>
<feature type="region of interest" description="Disordered" evidence="3">
    <location>
        <begin position="410"/>
        <end position="473"/>
    </location>
</feature>
<feature type="region of interest" description="Mediates interaction with CDK5RAP3" evidence="1">
    <location>
        <begin position="490"/>
        <end position="683"/>
    </location>
</feature>
<feature type="region of interest" description="Disordered" evidence="3">
    <location>
        <begin position="742"/>
        <end position="765"/>
    </location>
</feature>
<feature type="modified residue" description="N-acetylalanine" evidence="2">
    <location>
        <position position="2"/>
    </location>
</feature>
<feature type="modified residue" description="Omega-N-methylarginine" evidence="23">
    <location>
        <position position="433"/>
    </location>
</feature>
<feature type="modified residue" description="Phosphoserine" evidence="21">
    <location>
        <position position="458"/>
    </location>
</feature>
<feature type="modified residue" description="Phosphoserine" evidence="2">
    <location>
        <position position="462"/>
    </location>
</feature>
<feature type="modified residue" description="Phosphothreonine" evidence="2">
    <location>
        <position position="535"/>
    </location>
</feature>
<feature type="modified residue" description="Phosphoserine" evidence="22">
    <location>
        <position position="752"/>
    </location>
</feature>
<feature type="modified residue" description="Phosphoserine" evidence="22">
    <location>
        <position position="753"/>
    </location>
</feature>
<feature type="splice variant" id="VSP_014249" description="In isoform 3." evidence="16">
    <location>
        <begin position="1"/>
        <end position="476"/>
    </location>
</feature>
<feature type="splice variant" id="VSP_014250" description="In isoform 2." evidence="15">
    <location>
        <begin position="1"/>
        <end position="80"/>
    </location>
</feature>
<feature type="splice variant" id="VSP_014251" description="In isoform 2." evidence="15">
    <original>DLQQ</original>
    <variation>MSEV</variation>
    <location>
        <begin position="81"/>
        <end position="84"/>
    </location>
</feature>
<feature type="sequence conflict" description="In Ref. 2; BAC98021 and 5; AAI38154/AAI32196." evidence="19" ref="2 5">
    <original>Q</original>
    <variation>R</variation>
    <location>
        <position position="122"/>
    </location>
</feature>
<feature type="sequence conflict" description="In Ref. 1; BAC27976." evidence="19" ref="1">
    <original>K</original>
    <variation>N</variation>
    <location>
        <position position="389"/>
    </location>
</feature>
<feature type="sequence conflict" description="In Ref. 1; BAB25395." evidence="19" ref="1">
    <original>E</original>
    <variation>G</variation>
    <location>
        <position position="408"/>
    </location>
</feature>
<feature type="sequence conflict" description="In Ref. 1; BAC38618." evidence="19" ref="1">
    <original>S</original>
    <variation>C</variation>
    <location>
        <position position="409"/>
    </location>
</feature>
<organism>
    <name type="scientific">Mus musculus</name>
    <name type="common">Mouse</name>
    <dbReference type="NCBI Taxonomy" id="10090"/>
    <lineage>
        <taxon>Eukaryota</taxon>
        <taxon>Metazoa</taxon>
        <taxon>Chordata</taxon>
        <taxon>Craniata</taxon>
        <taxon>Vertebrata</taxon>
        <taxon>Euteleostomi</taxon>
        <taxon>Mammalia</taxon>
        <taxon>Eutheria</taxon>
        <taxon>Euarchontoglires</taxon>
        <taxon>Glires</taxon>
        <taxon>Rodentia</taxon>
        <taxon>Myomorpha</taxon>
        <taxon>Muroidea</taxon>
        <taxon>Muridae</taxon>
        <taxon>Murinae</taxon>
        <taxon>Mus</taxon>
        <taxon>Mus</taxon>
    </lineage>
</organism>
<accession>Q8CCJ3</accession>
<accession>A2RSP7</accession>
<accession>B1AXU5</accession>
<accession>B1AXU6</accession>
<accession>Q3V145</accession>
<accession>Q6ZQ50</accession>
<accession>Q8BT70</accession>
<accession>Q8C484</accession>
<accession>Q9D8I8</accession>
<proteinExistence type="evidence at protein level"/>
<reference key="1">
    <citation type="journal article" date="2005" name="Science">
        <title>The transcriptional landscape of the mammalian genome.</title>
        <authorList>
            <person name="Carninci P."/>
            <person name="Kasukawa T."/>
            <person name="Katayama S."/>
            <person name="Gough J."/>
            <person name="Frith M.C."/>
            <person name="Maeda N."/>
            <person name="Oyama R."/>
            <person name="Ravasi T."/>
            <person name="Lenhard B."/>
            <person name="Wells C."/>
            <person name="Kodzius R."/>
            <person name="Shimokawa K."/>
            <person name="Bajic V.B."/>
            <person name="Brenner S.E."/>
            <person name="Batalov S."/>
            <person name="Forrest A.R."/>
            <person name="Zavolan M."/>
            <person name="Davis M.J."/>
            <person name="Wilming L.G."/>
            <person name="Aidinis V."/>
            <person name="Allen J.E."/>
            <person name="Ambesi-Impiombato A."/>
            <person name="Apweiler R."/>
            <person name="Aturaliya R.N."/>
            <person name="Bailey T.L."/>
            <person name="Bansal M."/>
            <person name="Baxter L."/>
            <person name="Beisel K.W."/>
            <person name="Bersano T."/>
            <person name="Bono H."/>
            <person name="Chalk A.M."/>
            <person name="Chiu K.P."/>
            <person name="Choudhary V."/>
            <person name="Christoffels A."/>
            <person name="Clutterbuck D.R."/>
            <person name="Crowe M.L."/>
            <person name="Dalla E."/>
            <person name="Dalrymple B.P."/>
            <person name="de Bono B."/>
            <person name="Della Gatta G."/>
            <person name="di Bernardo D."/>
            <person name="Down T."/>
            <person name="Engstrom P."/>
            <person name="Fagiolini M."/>
            <person name="Faulkner G."/>
            <person name="Fletcher C.F."/>
            <person name="Fukushima T."/>
            <person name="Furuno M."/>
            <person name="Futaki S."/>
            <person name="Gariboldi M."/>
            <person name="Georgii-Hemming P."/>
            <person name="Gingeras T.R."/>
            <person name="Gojobori T."/>
            <person name="Green R.E."/>
            <person name="Gustincich S."/>
            <person name="Harbers M."/>
            <person name="Hayashi Y."/>
            <person name="Hensch T.K."/>
            <person name="Hirokawa N."/>
            <person name="Hill D."/>
            <person name="Huminiecki L."/>
            <person name="Iacono M."/>
            <person name="Ikeo K."/>
            <person name="Iwama A."/>
            <person name="Ishikawa T."/>
            <person name="Jakt M."/>
            <person name="Kanapin A."/>
            <person name="Katoh M."/>
            <person name="Kawasawa Y."/>
            <person name="Kelso J."/>
            <person name="Kitamura H."/>
            <person name="Kitano H."/>
            <person name="Kollias G."/>
            <person name="Krishnan S.P."/>
            <person name="Kruger A."/>
            <person name="Kummerfeld S.K."/>
            <person name="Kurochkin I.V."/>
            <person name="Lareau L.F."/>
            <person name="Lazarevic D."/>
            <person name="Lipovich L."/>
            <person name="Liu J."/>
            <person name="Liuni S."/>
            <person name="McWilliam S."/>
            <person name="Madan Babu M."/>
            <person name="Madera M."/>
            <person name="Marchionni L."/>
            <person name="Matsuda H."/>
            <person name="Matsuzawa S."/>
            <person name="Miki H."/>
            <person name="Mignone F."/>
            <person name="Miyake S."/>
            <person name="Morris K."/>
            <person name="Mottagui-Tabar S."/>
            <person name="Mulder N."/>
            <person name="Nakano N."/>
            <person name="Nakauchi H."/>
            <person name="Ng P."/>
            <person name="Nilsson R."/>
            <person name="Nishiguchi S."/>
            <person name="Nishikawa S."/>
            <person name="Nori F."/>
            <person name="Ohara O."/>
            <person name="Okazaki Y."/>
            <person name="Orlando V."/>
            <person name="Pang K.C."/>
            <person name="Pavan W.J."/>
            <person name="Pavesi G."/>
            <person name="Pesole G."/>
            <person name="Petrovsky N."/>
            <person name="Piazza S."/>
            <person name="Reed J."/>
            <person name="Reid J.F."/>
            <person name="Ring B.Z."/>
            <person name="Ringwald M."/>
            <person name="Rost B."/>
            <person name="Ruan Y."/>
            <person name="Salzberg S.L."/>
            <person name="Sandelin A."/>
            <person name="Schneider C."/>
            <person name="Schoenbach C."/>
            <person name="Sekiguchi K."/>
            <person name="Semple C.A."/>
            <person name="Seno S."/>
            <person name="Sessa L."/>
            <person name="Sheng Y."/>
            <person name="Shibata Y."/>
            <person name="Shimada H."/>
            <person name="Shimada K."/>
            <person name="Silva D."/>
            <person name="Sinclair B."/>
            <person name="Sperling S."/>
            <person name="Stupka E."/>
            <person name="Sugiura K."/>
            <person name="Sultana R."/>
            <person name="Takenaka Y."/>
            <person name="Taki K."/>
            <person name="Tammoja K."/>
            <person name="Tan S.L."/>
            <person name="Tang S."/>
            <person name="Taylor M.S."/>
            <person name="Tegner J."/>
            <person name="Teichmann S.A."/>
            <person name="Ueda H.R."/>
            <person name="van Nimwegen E."/>
            <person name="Verardo R."/>
            <person name="Wei C.L."/>
            <person name="Yagi K."/>
            <person name="Yamanishi H."/>
            <person name="Zabarovsky E."/>
            <person name="Zhu S."/>
            <person name="Zimmer A."/>
            <person name="Hide W."/>
            <person name="Bult C."/>
            <person name="Grimmond S.M."/>
            <person name="Teasdale R.D."/>
            <person name="Liu E.T."/>
            <person name="Brusic V."/>
            <person name="Quackenbush J."/>
            <person name="Wahlestedt C."/>
            <person name="Mattick J.S."/>
            <person name="Hume D.A."/>
            <person name="Kai C."/>
            <person name="Sasaki D."/>
            <person name="Tomaru Y."/>
            <person name="Fukuda S."/>
            <person name="Kanamori-Katayama M."/>
            <person name="Suzuki M."/>
            <person name="Aoki J."/>
            <person name="Arakawa T."/>
            <person name="Iida J."/>
            <person name="Imamura K."/>
            <person name="Itoh M."/>
            <person name="Kato T."/>
            <person name="Kawaji H."/>
            <person name="Kawagashira N."/>
            <person name="Kawashima T."/>
            <person name="Kojima M."/>
            <person name="Kondo S."/>
            <person name="Konno H."/>
            <person name="Nakano K."/>
            <person name="Ninomiya N."/>
            <person name="Nishio T."/>
            <person name="Okada M."/>
            <person name="Plessy C."/>
            <person name="Shibata K."/>
            <person name="Shiraki T."/>
            <person name="Suzuki S."/>
            <person name="Tagami M."/>
            <person name="Waki K."/>
            <person name="Watahiki A."/>
            <person name="Okamura-Oho Y."/>
            <person name="Suzuki H."/>
            <person name="Kawai J."/>
            <person name="Hayashizaki Y."/>
        </authorList>
    </citation>
    <scope>NUCLEOTIDE SEQUENCE [LARGE SCALE MRNA] (ISOFORMS 1 AND 3)</scope>
    <source>
        <strain>C57BL/6J</strain>
        <tissue>Cerebellum</tissue>
        <tissue>Embryo</tissue>
        <tissue>Pancreas</tissue>
        <tissue>Testis</tissue>
    </source>
</reference>
<reference key="2">
    <citation type="journal article" date="2003" name="DNA Res.">
        <title>Prediction of the coding sequences of mouse homologues of KIAA gene: III. The complete nucleotide sequences of 500 mouse KIAA-homologous cDNAs identified by screening of terminal sequences of cDNA clones randomly sampled from size-fractionated libraries.</title>
        <authorList>
            <person name="Okazaki N."/>
            <person name="Kikuno R."/>
            <person name="Ohara R."/>
            <person name="Inamoto S."/>
            <person name="Koseki H."/>
            <person name="Hiraoka S."/>
            <person name="Saga Y."/>
            <person name="Nagase T."/>
            <person name="Ohara O."/>
            <person name="Koga H."/>
        </authorList>
    </citation>
    <scope>NUCLEOTIDE SEQUENCE [LARGE SCALE MRNA] (ISOFORM 2)</scope>
    <source>
        <tissue>Embryonic tail</tissue>
    </source>
</reference>
<reference key="3">
    <citation type="journal article" date="2009" name="PLoS Biol.">
        <title>Lineage-specific biology revealed by a finished genome assembly of the mouse.</title>
        <authorList>
            <person name="Church D.M."/>
            <person name="Goodstadt L."/>
            <person name="Hillier L.W."/>
            <person name="Zody M.C."/>
            <person name="Goldstein S."/>
            <person name="She X."/>
            <person name="Bult C.J."/>
            <person name="Agarwala R."/>
            <person name="Cherry J.L."/>
            <person name="DiCuccio M."/>
            <person name="Hlavina W."/>
            <person name="Kapustin Y."/>
            <person name="Meric P."/>
            <person name="Maglott D."/>
            <person name="Birtle Z."/>
            <person name="Marques A.C."/>
            <person name="Graves T."/>
            <person name="Zhou S."/>
            <person name="Teague B."/>
            <person name="Potamousis K."/>
            <person name="Churas C."/>
            <person name="Place M."/>
            <person name="Herschleb J."/>
            <person name="Runnheim R."/>
            <person name="Forrest D."/>
            <person name="Amos-Landgraf J."/>
            <person name="Schwartz D.C."/>
            <person name="Cheng Z."/>
            <person name="Lindblad-Toh K."/>
            <person name="Eichler E.E."/>
            <person name="Ponting C.P."/>
        </authorList>
    </citation>
    <scope>NUCLEOTIDE SEQUENCE [LARGE SCALE GENOMIC DNA]</scope>
    <source>
        <strain>C57BL/6J</strain>
    </source>
</reference>
<reference key="4">
    <citation type="submission" date="2005-09" db="EMBL/GenBank/DDBJ databases">
        <authorList>
            <person name="Mural R.J."/>
            <person name="Adams M.D."/>
            <person name="Myers E.W."/>
            <person name="Smith H.O."/>
            <person name="Venter J.C."/>
        </authorList>
    </citation>
    <scope>NUCLEOTIDE SEQUENCE [LARGE SCALE GENOMIC DNA]</scope>
</reference>
<reference key="5">
    <citation type="journal article" date="2004" name="Genome Res.">
        <title>The status, quality, and expansion of the NIH full-length cDNA project: the Mammalian Gene Collection (MGC).</title>
        <authorList>
            <consortium name="The MGC Project Team"/>
        </authorList>
    </citation>
    <scope>NUCLEOTIDE SEQUENCE [LARGE SCALE MRNA]</scope>
    <source>
        <tissue>Brain</tissue>
    </source>
</reference>
<reference key="6">
    <citation type="journal article" date="2007" name="Mol. Cell. Proteomics">
        <title>Mitochondrial phosphoproteome revealed by an improved IMAC method and MS/MS/MS.</title>
        <authorList>
            <person name="Lee J."/>
            <person name="Xu Y."/>
            <person name="Chen Y."/>
            <person name="Sprung R."/>
            <person name="Kim S.C."/>
            <person name="Xie S."/>
            <person name="Zhao Y."/>
        </authorList>
    </citation>
    <scope>PHOSPHORYLATION [LARGE SCALE ANALYSIS] AT SER-458</scope>
    <scope>IDENTIFICATION BY MASS SPECTROMETRY [LARGE SCALE ANALYSIS]</scope>
    <source>
        <tissue>Liver</tissue>
    </source>
</reference>
<reference key="7">
    <citation type="journal article" date="2007" name="Proc. Natl. Acad. Sci. U.S.A.">
        <title>Large-scale phosphorylation analysis of mouse liver.</title>
        <authorList>
            <person name="Villen J."/>
            <person name="Beausoleil S.A."/>
            <person name="Gerber S.A."/>
            <person name="Gygi S.P."/>
        </authorList>
    </citation>
    <scope>PHOSPHORYLATION [LARGE SCALE ANALYSIS] AT SER-752 AND SER-753</scope>
    <scope>IDENTIFICATION BY MASS SPECTROMETRY [LARGE SCALE ANALYSIS]</scope>
    <source>
        <tissue>Liver</tissue>
    </source>
</reference>
<reference key="8">
    <citation type="journal article" date="2010" name="Cell">
        <title>A tissue-specific atlas of mouse protein phosphorylation and expression.</title>
        <authorList>
            <person name="Huttlin E.L."/>
            <person name="Jedrychowski M.P."/>
            <person name="Elias J.E."/>
            <person name="Goswami T."/>
            <person name="Rad R."/>
            <person name="Beausoleil S.A."/>
            <person name="Villen J."/>
            <person name="Haas W."/>
            <person name="Sowa M.E."/>
            <person name="Gygi S.P."/>
        </authorList>
    </citation>
    <scope>IDENTIFICATION BY MASS SPECTROMETRY [LARGE SCALE ANALYSIS]</scope>
    <source>
        <tissue>Heart</tissue>
        <tissue>Kidney</tissue>
        <tissue>Liver</tissue>
        <tissue>Lung</tissue>
        <tissue>Pancreas</tissue>
        <tissue>Spleen</tissue>
        <tissue>Testis</tissue>
    </source>
</reference>
<reference key="9">
    <citation type="journal article" date="2010" name="EMBO J.">
        <title>Suppression of the novel ER protein Maxer by mutant ataxin-1 in Bergman glia contributes to non-cell-autonomous toxicity.</title>
        <authorList>
            <person name="Shiwaku H."/>
            <person name="Yoshimura N."/>
            <person name="Tamura T."/>
            <person name="Sone M."/>
            <person name="Ogishima S."/>
            <person name="Watase K."/>
            <person name="Tagawa K."/>
            <person name="Okazawa H."/>
        </authorList>
    </citation>
    <scope>TISSUE SPECIFICITY</scope>
</reference>
<reference key="10">
    <citation type="journal article" date="2010" name="J. Biol. Chem.">
        <title>A novel C53/LZAP-interacting protein regulates stability of C53/LZAP and DDRGK domain-containing Protein 1 (DDRGK1) and modulates NF-kappaB signaling.</title>
        <authorList>
            <person name="Wu J."/>
            <person name="Lei G."/>
            <person name="Mei M."/>
            <person name="Tang Y."/>
            <person name="Li H."/>
        </authorList>
    </citation>
    <scope>TISSUE SPECIFICITY</scope>
</reference>
<reference key="11">
    <citation type="journal article" date="2011" name="PLoS ONE">
        <title>Ubiquitin fold modifier 1 (UFM1) and its target UFBP1 protect pancreatic beta cells from ER stress-induced apoptosis.</title>
        <authorList>
            <person name="Lemaire K."/>
            <person name="Moura R.F."/>
            <person name="Granvik M."/>
            <person name="Igoillo-Esteve M."/>
            <person name="Hohmeier H.E."/>
            <person name="Hendrickx N."/>
            <person name="Newgard C.B."/>
            <person name="Waelkens E."/>
            <person name="Cnop M."/>
            <person name="Schuit F."/>
        </authorList>
    </citation>
    <scope>INTERACTION WITH CDK5RAP3</scope>
    <scope>TISSUE SPECIFICITY</scope>
</reference>
<reference key="12">
    <citation type="journal article" date="2014" name="Mol. Cell. Proteomics">
        <title>Immunoaffinity enrichment and mass spectrometry analysis of protein methylation.</title>
        <authorList>
            <person name="Guo A."/>
            <person name="Gu H."/>
            <person name="Zhou J."/>
            <person name="Mulhern D."/>
            <person name="Wang Y."/>
            <person name="Lee K.A."/>
            <person name="Yang V."/>
            <person name="Aguiar M."/>
            <person name="Kornhauser J."/>
            <person name="Jia X."/>
            <person name="Ren J."/>
            <person name="Beausoleil S.A."/>
            <person name="Silva J.C."/>
            <person name="Vemulapalli V."/>
            <person name="Bedford M.T."/>
            <person name="Comb M.J."/>
        </authorList>
    </citation>
    <scope>METHYLATION [LARGE SCALE ANALYSIS] AT ARG-433</scope>
    <scope>IDENTIFICATION BY MASS SPECTROMETRY [LARGE SCALE ANALYSIS]</scope>
    <source>
        <tissue>Brain</tissue>
    </source>
</reference>
<reference key="13">
    <citation type="journal article" date="2015" name="Cell Death Differ.">
        <title>RCAD/Ufl1, a Ufm1 E3 ligase, is essential for hematopoietic stem cell function and murine hematopoiesis.</title>
        <authorList>
            <person name="Zhang M."/>
            <person name="Zhu X."/>
            <person name="Zhang Y."/>
            <person name="Cai Y."/>
            <person name="Chen J."/>
            <person name="Sivaprakasam S."/>
            <person name="Gurav A."/>
            <person name="Pi W."/>
            <person name="Makala L."/>
            <person name="Wu J."/>
            <person name="Pace B."/>
            <person name="Tuan-Lo D."/>
            <person name="Ganapathy V."/>
            <person name="Singh N."/>
            <person name="Li H."/>
        </authorList>
    </citation>
    <scope>FUNCTION</scope>
    <scope>DISRUPTION PHENOTYPE</scope>
</reference>
<reference key="14">
    <citation type="journal article" date="2017" name="Cell">
        <title>The mammalian ribo-interactome reveals ribosome functional diversity and heterogeneity.</title>
        <authorList>
            <person name="Simsek D."/>
            <person name="Tiu G.C."/>
            <person name="Flynn R.A."/>
            <person name="Byeon G.W."/>
            <person name="Leppek K."/>
            <person name="Xu A.F."/>
            <person name="Chang H.Y."/>
            <person name="Barna M."/>
        </authorList>
    </citation>
    <scope>FUNCTION</scope>
</reference>
<reference key="15">
    <citation type="journal article" date="2018" name="Circ. Heart Fail.">
        <title>Ufm1-specific ligase Ufl1 regulates endoplasmic reticulum homeostasis and protects against heart failure.</title>
        <authorList>
            <person name="Li J."/>
            <person name="Yue G."/>
            <person name="Ma W."/>
            <person name="Zhang A."/>
            <person name="Zou J."/>
            <person name="Cai Y."/>
            <person name="Tang X."/>
            <person name="Wang J."/>
            <person name="Liu J."/>
            <person name="Li H."/>
            <person name="Su H."/>
        </authorList>
    </citation>
    <scope>TISSUE SPECIFICITY</scope>
    <scope>INDUCTION</scope>
    <scope>DISRUPTION PHENOTYPE</scope>
</reference>
<reference key="16">
    <citation type="journal article" date="2018" name="DNA Cell Biol.">
        <title>Ufmylation is activated in vascular remodeling and lipopolysaccharide-induced endothelial cell injury.</title>
        <authorList>
            <person name="Su M."/>
            <person name="Yue Z."/>
            <person name="Wang H."/>
            <person name="Jia M."/>
            <person name="Bai C."/>
            <person name="Qiu W."/>
            <person name="Chen J."/>
        </authorList>
    </citation>
    <scope>FUNCTION</scope>
</reference>
<reference key="17">
    <citation type="journal article" date="2019" name="Cell Discov.">
        <title>Indispensable role of the ubiquitin-fold modifier 1-specific E3 ligase in maintaining intestinal homeostasis and controlling gut inflammation.</title>
        <authorList>
            <person name="Cai Y."/>
            <person name="Zhu G."/>
            <person name="Liu S."/>
            <person name="Pan Z."/>
            <person name="Quintero M."/>
            <person name="Poole C.J."/>
            <person name="Lu C."/>
            <person name="Zhu H."/>
            <person name="Islam B."/>
            <person name="Riggelen J.V."/>
            <person name="Browning D."/>
            <person name="Liu K."/>
            <person name="Blumberg R."/>
            <person name="Singh N."/>
            <person name="Li H."/>
        </authorList>
    </citation>
    <scope>FUNCTION</scope>
    <scope>TISSUE SPECIFICITY</scope>
    <scope>DISRUPTION PHENOTYPE</scope>
</reference>
<reference key="18">
    <citation type="journal article" date="2019" name="Development">
        <title>CDK5RAP3, a UFL1 substrate adaptor, is crucial for liver development.</title>
        <authorList>
            <person name="Yang R."/>
            <person name="Wang H."/>
            <person name="Kang B."/>
            <person name="Chen B."/>
            <person name="Shi Y."/>
            <person name="Yang S."/>
            <person name="Sun L."/>
            <person name="Liu Y."/>
            <person name="Xiao W."/>
            <person name="Zhang T."/>
            <person name="Yang J."/>
            <person name="Zhang Y."/>
            <person name="Zhu M."/>
            <person name="Xu P."/>
            <person name="Chang Y."/>
            <person name="Jia Y."/>
            <person name="Huang Y."/>
        </authorList>
    </citation>
    <scope>INTERACTION WITH CDK5RAP3</scope>
</reference>
<reference key="19">
    <citation type="journal article" date="2023" name="FASEB J.">
        <title>UFMylation of HRD1 regulates endoplasmic reticulum homeostasis.</title>
        <authorList>
            <person name="Luo H."/>
            <person name="Jiao Q.B."/>
            <person name="Shen C.B."/>
            <person name="Gong W.Y."/>
            <person name="Yuan J.H."/>
            <person name="Liu Y.Y."/>
            <person name="Chen Z."/>
            <person name="Liu J."/>
            <person name="Xu X.L."/>
            <person name="Cong Y.S."/>
            <person name="Zhang X.W."/>
        </authorList>
    </citation>
    <scope>FUNCTION</scope>
    <scope>SUBCELLULAR LOCATION</scope>
</reference>
<reference key="20">
    <citation type="journal article" date="2024" name="Mol. Cell">
        <title>UFL1 ablation in T cells suppresses PD-1 UFMylation to enhance anti-tumor immunity.</title>
        <authorList>
            <person name="He C."/>
            <person name="Xing X."/>
            <person name="Chen H.Y."/>
            <person name="Gao M."/>
            <person name="Shi J."/>
            <person name="Xiang B."/>
            <person name="Xiao X."/>
            <person name="Sun Y."/>
            <person name="Yu H."/>
            <person name="Xu G."/>
            <person name="Yao Y."/>
            <person name="Xie Z."/>
            <person name="Xing Y."/>
            <person name="Budiarto B.R."/>
            <person name="Chen S.Y."/>
            <person name="Gao Y."/>
            <person name="Lee Y.R."/>
            <person name="Zhang J."/>
        </authorList>
    </citation>
    <scope>FUNCTION</scope>
    <scope>DISRUPTION PHENOTYPE</scope>
</reference>
<dbReference type="EC" id="2.3.2.-" evidence="2"/>
<dbReference type="EMBL" id="AK007993">
    <property type="protein sequence ID" value="BAB25395.1"/>
    <property type="molecule type" value="mRNA"/>
</dbReference>
<dbReference type="EMBL" id="AK013382">
    <property type="protein sequence ID" value="BAC25404.1"/>
    <property type="molecule type" value="mRNA"/>
</dbReference>
<dbReference type="EMBL" id="AK032663">
    <property type="protein sequence ID" value="BAC27976.1"/>
    <property type="molecule type" value="mRNA"/>
</dbReference>
<dbReference type="EMBL" id="AK082785">
    <property type="protein sequence ID" value="BAC38618.1"/>
    <property type="molecule type" value="mRNA"/>
</dbReference>
<dbReference type="EMBL" id="AK129211">
    <property type="protein sequence ID" value="BAC98021.1"/>
    <property type="status" value="ALT_INIT"/>
    <property type="molecule type" value="mRNA"/>
</dbReference>
<dbReference type="EMBL" id="AK132697">
    <property type="protein sequence ID" value="BAE21308.1"/>
    <property type="molecule type" value="mRNA"/>
</dbReference>
<dbReference type="EMBL" id="AL831754">
    <property type="status" value="NOT_ANNOTATED_CDS"/>
    <property type="molecule type" value="Genomic_DNA"/>
</dbReference>
<dbReference type="EMBL" id="AL935267">
    <property type="status" value="NOT_ANNOTATED_CDS"/>
    <property type="molecule type" value="Genomic_DNA"/>
</dbReference>
<dbReference type="EMBL" id="CH466538">
    <property type="protein sequence ID" value="EDL05527.1"/>
    <property type="molecule type" value="Genomic_DNA"/>
</dbReference>
<dbReference type="EMBL" id="BC138153">
    <property type="protein sequence ID" value="AAI38154.1"/>
    <property type="molecule type" value="mRNA"/>
</dbReference>
<dbReference type="EMBL" id="BC132195">
    <property type="protein sequence ID" value="AAI32196.1"/>
    <property type="molecule type" value="mRNA"/>
</dbReference>
<dbReference type="CCDS" id="CCDS18010.1">
    <molecule id="Q8CCJ3-3"/>
</dbReference>
<dbReference type="RefSeq" id="NP_001342441.1">
    <molecule id="Q8CCJ3-3"/>
    <property type="nucleotide sequence ID" value="NM_001355512.1"/>
</dbReference>
<dbReference type="RefSeq" id="NP_080470.2">
    <molecule id="Q8CCJ3-3"/>
    <property type="nucleotide sequence ID" value="NM_026194.5"/>
</dbReference>
<dbReference type="RefSeq" id="XP_006538266.1">
    <property type="nucleotide sequence ID" value="XM_006538203.3"/>
</dbReference>
<dbReference type="SMR" id="Q8CCJ3"/>
<dbReference type="BioGRID" id="212226">
    <property type="interactions" value="61"/>
</dbReference>
<dbReference type="FunCoup" id="Q8CCJ3">
    <property type="interactions" value="4417"/>
</dbReference>
<dbReference type="IntAct" id="Q8CCJ3">
    <property type="interactions" value="60"/>
</dbReference>
<dbReference type="MINT" id="Q8CCJ3"/>
<dbReference type="STRING" id="10090.ENSMUSP00000100059"/>
<dbReference type="GlyGen" id="Q8CCJ3">
    <property type="glycosylation" value="2 sites, 1 O-linked glycan (1 site)"/>
</dbReference>
<dbReference type="iPTMnet" id="Q8CCJ3"/>
<dbReference type="PhosphoSitePlus" id="Q8CCJ3"/>
<dbReference type="SwissPalm" id="Q8CCJ3"/>
<dbReference type="jPOST" id="Q8CCJ3"/>
<dbReference type="PaxDb" id="10090-ENSMUSP00000100059"/>
<dbReference type="PeptideAtlas" id="Q8CCJ3"/>
<dbReference type="ProteomicsDB" id="297806">
    <molecule id="Q8CCJ3-3"/>
</dbReference>
<dbReference type="ProteomicsDB" id="297807">
    <molecule id="Q8CCJ3-1"/>
</dbReference>
<dbReference type="ProteomicsDB" id="297808">
    <molecule id="Q8CCJ3-2"/>
</dbReference>
<dbReference type="Pumba" id="Q8CCJ3"/>
<dbReference type="Antibodypedia" id="31948">
    <property type="antibodies" value="109 antibodies from 23 providers"/>
</dbReference>
<dbReference type="Ensembl" id="ENSMUST00000038705.8">
    <molecule id="Q8CCJ3-1"/>
    <property type="protein sequence ID" value="ENSMUSP00000042118.8"/>
    <property type="gene ID" value="ENSMUSG00000040359.15"/>
</dbReference>
<dbReference type="Ensembl" id="ENSMUST00000102994.10">
    <molecule id="Q8CCJ3-3"/>
    <property type="protein sequence ID" value="ENSMUSP00000100059.4"/>
    <property type="gene ID" value="ENSMUSG00000040359.15"/>
</dbReference>
<dbReference type="GeneID" id="67490"/>
<dbReference type="KEGG" id="mmu:67490"/>
<dbReference type="UCSC" id="uc008seg.2">
    <molecule id="Q8CCJ3-3"/>
    <property type="organism name" value="mouse"/>
</dbReference>
<dbReference type="UCSC" id="uc012dbb.1">
    <molecule id="Q8CCJ3-1"/>
    <property type="organism name" value="mouse"/>
</dbReference>
<dbReference type="AGR" id="MGI:1914740"/>
<dbReference type="CTD" id="23376"/>
<dbReference type="MGI" id="MGI:1914740">
    <property type="gene designation" value="Ufl1"/>
</dbReference>
<dbReference type="VEuPathDB" id="HostDB:ENSMUSG00000040359"/>
<dbReference type="eggNOG" id="KOG2235">
    <property type="taxonomic scope" value="Eukaryota"/>
</dbReference>
<dbReference type="GeneTree" id="ENSGT00390000002112"/>
<dbReference type="HOGENOM" id="CLU_012417_1_0_1"/>
<dbReference type="InParanoid" id="Q8CCJ3"/>
<dbReference type="OMA" id="CILHASG"/>
<dbReference type="OrthoDB" id="10258297at2759"/>
<dbReference type="PhylomeDB" id="Q8CCJ3"/>
<dbReference type="TreeFam" id="TF319116"/>
<dbReference type="Reactome" id="R-MMU-983168">
    <property type="pathway name" value="Antigen processing: Ubiquitination &amp; Proteasome degradation"/>
</dbReference>
<dbReference type="BioGRID-ORCS" id="67490">
    <property type="hits" value="25 hits in 81 CRISPR screens"/>
</dbReference>
<dbReference type="CD-CODE" id="CE726F99">
    <property type="entry name" value="Postsynaptic density"/>
</dbReference>
<dbReference type="ChiTaRS" id="Cdh4">
    <property type="organism name" value="mouse"/>
</dbReference>
<dbReference type="PRO" id="PR:Q8CCJ3"/>
<dbReference type="Proteomes" id="UP000000589">
    <property type="component" value="Chromosome 4"/>
</dbReference>
<dbReference type="RNAct" id="Q8CCJ3">
    <property type="molecule type" value="protein"/>
</dbReference>
<dbReference type="Bgee" id="ENSMUSG00000040359">
    <property type="expression patterns" value="Expressed in spermatocyte and 230 other cell types or tissues"/>
</dbReference>
<dbReference type="GO" id="GO:0005737">
    <property type="term" value="C:cytoplasm"/>
    <property type="evidence" value="ECO:0000314"/>
    <property type="project" value="MGI"/>
</dbReference>
<dbReference type="GO" id="GO:0005829">
    <property type="term" value="C:cytosol"/>
    <property type="evidence" value="ECO:0007669"/>
    <property type="project" value="UniProtKB-SubCell"/>
</dbReference>
<dbReference type="GO" id="GO:0005783">
    <property type="term" value="C:endoplasmic reticulum"/>
    <property type="evidence" value="ECO:0000250"/>
    <property type="project" value="UniProtKB"/>
</dbReference>
<dbReference type="GO" id="GO:0005789">
    <property type="term" value="C:endoplasmic reticulum membrane"/>
    <property type="evidence" value="ECO:0000250"/>
    <property type="project" value="UniProtKB"/>
</dbReference>
<dbReference type="GO" id="GO:0005741">
    <property type="term" value="C:mitochondrial outer membrane"/>
    <property type="evidence" value="ECO:0007669"/>
    <property type="project" value="Ensembl"/>
</dbReference>
<dbReference type="GO" id="GO:0043005">
    <property type="term" value="C:neuron projection"/>
    <property type="evidence" value="ECO:0000314"/>
    <property type="project" value="MGI"/>
</dbReference>
<dbReference type="GO" id="GO:0005634">
    <property type="term" value="C:nucleus"/>
    <property type="evidence" value="ECO:0000250"/>
    <property type="project" value="UniProtKB"/>
</dbReference>
<dbReference type="GO" id="GO:0032991">
    <property type="term" value="C:protein-containing complex"/>
    <property type="evidence" value="ECO:0000266"/>
    <property type="project" value="MGI"/>
</dbReference>
<dbReference type="GO" id="GO:0035861">
    <property type="term" value="C:site of double-strand break"/>
    <property type="evidence" value="ECO:0000250"/>
    <property type="project" value="UniProtKB"/>
</dbReference>
<dbReference type="GO" id="GO:0019901">
    <property type="term" value="F:protein kinase binding"/>
    <property type="evidence" value="ECO:0007669"/>
    <property type="project" value="Ensembl"/>
</dbReference>
<dbReference type="GO" id="GO:0061666">
    <property type="term" value="F:UFM1 ligase activity"/>
    <property type="evidence" value="ECO:0000250"/>
    <property type="project" value="UniProtKB"/>
</dbReference>
<dbReference type="GO" id="GO:0000077">
    <property type="term" value="P:DNA damage checkpoint signaling"/>
    <property type="evidence" value="ECO:0000250"/>
    <property type="project" value="UniProtKB"/>
</dbReference>
<dbReference type="GO" id="GO:0006974">
    <property type="term" value="P:DNA damage response"/>
    <property type="evidence" value="ECO:0000250"/>
    <property type="project" value="UniProtKB"/>
</dbReference>
<dbReference type="GO" id="GO:0006281">
    <property type="term" value="P:DNA repair"/>
    <property type="evidence" value="ECO:0007669"/>
    <property type="project" value="UniProtKB-KW"/>
</dbReference>
<dbReference type="GO" id="GO:0030218">
    <property type="term" value="P:erythrocyte differentiation"/>
    <property type="evidence" value="ECO:0000315"/>
    <property type="project" value="UniProtKB"/>
</dbReference>
<dbReference type="GO" id="GO:0060218">
    <property type="term" value="P:hematopoietic stem cell differentiation"/>
    <property type="evidence" value="ECO:0000315"/>
    <property type="project" value="UniProtKB"/>
</dbReference>
<dbReference type="GO" id="GO:1903895">
    <property type="term" value="P:negative regulation of IRE1-mediated unfolded protein response"/>
    <property type="evidence" value="ECO:0000250"/>
    <property type="project" value="UniProtKB"/>
</dbReference>
<dbReference type="GO" id="GO:0032088">
    <property type="term" value="P:negative regulation of NF-kappaB transcription factor activity"/>
    <property type="evidence" value="ECO:0000250"/>
    <property type="project" value="UniProtKB"/>
</dbReference>
<dbReference type="GO" id="GO:0031397">
    <property type="term" value="P:negative regulation of protein ubiquitination"/>
    <property type="evidence" value="ECO:0000250"/>
    <property type="project" value="UniProtKB"/>
</dbReference>
<dbReference type="GO" id="GO:0050868">
    <property type="term" value="P:negative regulation of T cell activation"/>
    <property type="evidence" value="ECO:0000315"/>
    <property type="project" value="UniProtKB"/>
</dbReference>
<dbReference type="GO" id="GO:0002841">
    <property type="term" value="P:negative regulation of T cell mediated immune response to tumor cell"/>
    <property type="evidence" value="ECO:0000250"/>
    <property type="project" value="UniProtKB"/>
</dbReference>
<dbReference type="GO" id="GO:0010508">
    <property type="term" value="P:positive regulation of autophagy"/>
    <property type="evidence" value="ECO:0000315"/>
    <property type="project" value="UniProtKB"/>
</dbReference>
<dbReference type="GO" id="GO:0008284">
    <property type="term" value="P:positive regulation of cell population proliferation"/>
    <property type="evidence" value="ECO:0000266"/>
    <property type="project" value="MGI"/>
</dbReference>
<dbReference type="GO" id="GO:0060252">
    <property type="term" value="P:positive regulation of glial cell proliferation"/>
    <property type="evidence" value="ECO:0000314"/>
    <property type="project" value="MGI"/>
</dbReference>
<dbReference type="GO" id="GO:0032092">
    <property type="term" value="P:positive regulation of protein binding"/>
    <property type="evidence" value="ECO:0000304"/>
    <property type="project" value="ParkinsonsUK-UCL"/>
</dbReference>
<dbReference type="GO" id="GO:1903052">
    <property type="term" value="P:positive regulation of proteolysis involved in protein catabolic process"/>
    <property type="evidence" value="ECO:0007669"/>
    <property type="project" value="Ensembl"/>
</dbReference>
<dbReference type="GO" id="GO:0140501">
    <property type="term" value="P:positive regulation of reticulophagy"/>
    <property type="evidence" value="ECO:0000250"/>
    <property type="project" value="UniProtKB"/>
</dbReference>
<dbReference type="GO" id="GO:1990592">
    <property type="term" value="P:protein K69-linked ufmylation"/>
    <property type="evidence" value="ECO:0000250"/>
    <property type="project" value="UniProtKB"/>
</dbReference>
<dbReference type="GO" id="GO:0050821">
    <property type="term" value="P:protein stabilization"/>
    <property type="evidence" value="ECO:0007669"/>
    <property type="project" value="Ensembl"/>
</dbReference>
<dbReference type="GO" id="GO:0071569">
    <property type="term" value="P:protein ufmylation"/>
    <property type="evidence" value="ECO:0000250"/>
    <property type="project" value="UniProtKB"/>
</dbReference>
<dbReference type="GO" id="GO:0043122">
    <property type="term" value="P:regulation of canonical NF-kappaB signal transduction"/>
    <property type="evidence" value="ECO:0000250"/>
    <property type="project" value="UniProtKB"/>
</dbReference>
<dbReference type="GO" id="GO:0010468">
    <property type="term" value="P:regulation of gene expression"/>
    <property type="evidence" value="ECO:0000315"/>
    <property type="project" value="MGI"/>
</dbReference>
<dbReference type="GO" id="GO:0050727">
    <property type="term" value="P:regulation of inflammatory response"/>
    <property type="evidence" value="ECO:0000250"/>
    <property type="project" value="UniProtKB"/>
</dbReference>
<dbReference type="GO" id="GO:0033146">
    <property type="term" value="P:regulation of intracellular estrogen receptor signaling pathway"/>
    <property type="evidence" value="ECO:0000250"/>
    <property type="project" value="UniProtKB"/>
</dbReference>
<dbReference type="GO" id="GO:0032434">
    <property type="term" value="P:regulation of proteasomal ubiquitin-dependent protein catabolic process"/>
    <property type="evidence" value="ECO:0000266"/>
    <property type="project" value="MGI"/>
</dbReference>
<dbReference type="GO" id="GO:0032880">
    <property type="term" value="P:regulation of protein localization"/>
    <property type="evidence" value="ECO:0000266"/>
    <property type="project" value="MGI"/>
</dbReference>
<dbReference type="GO" id="GO:0072344">
    <property type="term" value="P:rescue of stalled ribosome"/>
    <property type="evidence" value="ECO:0000250"/>
    <property type="project" value="UniProtKB"/>
</dbReference>
<dbReference type="GO" id="GO:0034976">
    <property type="term" value="P:response to endoplasmic reticulum stress"/>
    <property type="evidence" value="ECO:0000315"/>
    <property type="project" value="UniProtKB"/>
</dbReference>
<dbReference type="GO" id="GO:1902065">
    <property type="term" value="P:response to L-glutamate"/>
    <property type="evidence" value="ECO:0000315"/>
    <property type="project" value="MGI"/>
</dbReference>
<dbReference type="GO" id="GO:0061709">
    <property type="term" value="P:reticulophagy"/>
    <property type="evidence" value="ECO:0000250"/>
    <property type="project" value="UniProtKB"/>
</dbReference>
<dbReference type="GO" id="GO:0032790">
    <property type="term" value="P:ribosome disassembly"/>
    <property type="evidence" value="ECO:0000250"/>
    <property type="project" value="UniProtKB"/>
</dbReference>
<dbReference type="InterPro" id="IPR018611">
    <property type="entry name" value="Ufl1"/>
</dbReference>
<dbReference type="InterPro" id="IPR056761">
    <property type="entry name" value="Ufl1-like_C"/>
</dbReference>
<dbReference type="InterPro" id="IPR056580">
    <property type="entry name" value="Ufl1_dom"/>
</dbReference>
<dbReference type="InterPro" id="IPR056579">
    <property type="entry name" value="Ufl1_N"/>
</dbReference>
<dbReference type="PANTHER" id="PTHR31057">
    <property type="entry name" value="E3 UFM1-PROTEIN LIGASE 1"/>
    <property type="match status" value="1"/>
</dbReference>
<dbReference type="PANTHER" id="PTHR31057:SF0">
    <property type="entry name" value="E3 UFM1-PROTEIN LIGASE 1"/>
    <property type="match status" value="1"/>
</dbReference>
<dbReference type="Pfam" id="PF09743">
    <property type="entry name" value="E3_UFM1_ligase"/>
    <property type="match status" value="1"/>
</dbReference>
<dbReference type="Pfam" id="PF23659">
    <property type="entry name" value="UFL1"/>
    <property type="match status" value="1"/>
</dbReference>
<dbReference type="Pfam" id="PF25041">
    <property type="entry name" value="UFL1_C"/>
    <property type="match status" value="1"/>
</dbReference>
<name>UFL1_MOUSE</name>
<protein>
    <recommendedName>
        <fullName evidence="19">E3 UFM1-protein ligase 1</fullName>
        <ecNumber evidence="2">2.3.2.-</ecNumber>
    </recommendedName>
    <alternativeName>
        <fullName evidence="19">E3 UFM1-protein transferase 1</fullName>
    </alternativeName>
    <alternativeName>
        <fullName evidence="17">Multiple alpha-helix protein located at ER</fullName>
    </alternativeName>
    <alternativeName>
        <fullName evidence="18">Regulator of C53/LZAP and DDRGK1</fullName>
    </alternativeName>
</protein>
<sequence length="793" mass="89520">MADAWEEIRRLAADFQRAQFAESTQRLSERNCIEIVNKLISQKQLEVVHTLDGKEYITPAQISKEMRDELHVRGGRVNIVDLQQVINVDLTHIESRVSDIIKSEKHVQMVLGQLIDENYLDQLSEEVNDKLQESGQVTVSELCKAYDLPGDFLTQALTQRLGRIINGHLDLDNRGVIFTEAFVARHKARIRGLFSAITRPTPVNSLVSKYGFQEQLLYSVLEDLVSTGRLRGTVVGGRQDKAVFVPDIYSRTQSTWVDSFFRQNGYLEFDALSRLGIPDAVNYIKKRYKNTQLLFLKATCVGQGLVDQVEASVEEAISSGTWVDISPLLPSSLSVEDAAMLLQQVMRPFGKLASAIVFSDTVVVSEKFITDCTGLFSERMHQKAEKEMKNNPVHLITEEDLKQISILESVNTSKKDKKDERRKKATEGSGSVRGGGGGNAREYKIKKTKKKGRKDEDSDDESQSSHGGKKKPDITFMFQDEIEDCLRKHIQDAPEEFISELAEYLIKPLNKMYLEVVRSVFMSSTSASGTGRKRTIKDLQEEVSNLYNNIRLFEKGMKYFADDTQTALTKHLLKTVCTDITNLMFNFLASDFLMAVEEPAAITSDIRKKILSKLTEETKVALTKLHNSLNEKSIEDFLSCLDSATEACDIMVKKGDKKRERQILFQHRQALCEQLKVTEDPALILHLTAVLLFQLSTHSMLHAPGRCVPQIIAFLHSKIPEDQHTLLVKYQGLVVKQLVSQNKKTGQGEDPSSDELDKEQHDVTNATRKELQELSLSIKDLVLKSRKSSVTEE</sequence>